<evidence type="ECO:0000255" key="1">
    <source>
        <dbReference type="HAMAP-Rule" id="MF_00240"/>
    </source>
</evidence>
<evidence type="ECO:0000256" key="2">
    <source>
        <dbReference type="SAM" id="MobiDB-lite"/>
    </source>
</evidence>
<comment type="function">
    <text evidence="1">Participates in the translocation of lipoproteins from the inner membrane to the outer membrane. Only forms a complex with a lipoprotein if the residue after the N-terminal Cys is not an aspartate (The Asp acts as a targeting signal to indicate that the lipoprotein should stay in the inner membrane).</text>
</comment>
<comment type="subunit">
    <text evidence="1">Monomer.</text>
</comment>
<comment type="subcellular location">
    <subcellularLocation>
        <location evidence="1">Periplasm</location>
    </subcellularLocation>
</comment>
<comment type="similarity">
    <text evidence="1">Belongs to the LolA family.</text>
</comment>
<protein>
    <recommendedName>
        <fullName evidence="1">Outer-membrane lipoprotein carrier protein</fullName>
    </recommendedName>
</protein>
<feature type="signal peptide" evidence="1">
    <location>
        <begin position="1"/>
        <end position="21"/>
    </location>
</feature>
<feature type="chain" id="PRO_1000100727" description="Outer-membrane lipoprotein carrier protein">
    <location>
        <begin position="22"/>
        <end position="203"/>
    </location>
</feature>
<feature type="region of interest" description="Disordered" evidence="2">
    <location>
        <begin position="178"/>
        <end position="203"/>
    </location>
</feature>
<dbReference type="EMBL" id="CP001127">
    <property type="protein sequence ID" value="ACF90147.1"/>
    <property type="molecule type" value="Genomic_DNA"/>
</dbReference>
<dbReference type="RefSeq" id="WP_001519746.1">
    <property type="nucleotide sequence ID" value="NC_011094.1"/>
</dbReference>
<dbReference type="SMR" id="B4TRS3"/>
<dbReference type="KEGG" id="sew:SeSA_A1075"/>
<dbReference type="HOGENOM" id="CLU_087560_1_1_6"/>
<dbReference type="Proteomes" id="UP000001865">
    <property type="component" value="Chromosome"/>
</dbReference>
<dbReference type="GO" id="GO:0030288">
    <property type="term" value="C:outer membrane-bounded periplasmic space"/>
    <property type="evidence" value="ECO:0007669"/>
    <property type="project" value="TreeGrafter"/>
</dbReference>
<dbReference type="GO" id="GO:0044874">
    <property type="term" value="P:lipoprotein localization to outer membrane"/>
    <property type="evidence" value="ECO:0007669"/>
    <property type="project" value="UniProtKB-UniRule"/>
</dbReference>
<dbReference type="GO" id="GO:0042953">
    <property type="term" value="P:lipoprotein transport"/>
    <property type="evidence" value="ECO:0007669"/>
    <property type="project" value="InterPro"/>
</dbReference>
<dbReference type="CDD" id="cd16325">
    <property type="entry name" value="LolA"/>
    <property type="match status" value="1"/>
</dbReference>
<dbReference type="FunFam" id="2.50.20.10:FF:000001">
    <property type="entry name" value="Outer-membrane lipoprotein carrier protein"/>
    <property type="match status" value="1"/>
</dbReference>
<dbReference type="Gene3D" id="2.50.20.10">
    <property type="entry name" value="Lipoprotein localisation LolA/LolB/LppX"/>
    <property type="match status" value="1"/>
</dbReference>
<dbReference type="HAMAP" id="MF_00240">
    <property type="entry name" value="LolA"/>
    <property type="match status" value="1"/>
</dbReference>
<dbReference type="InterPro" id="IPR029046">
    <property type="entry name" value="LolA/LolB/LppX"/>
</dbReference>
<dbReference type="InterPro" id="IPR004564">
    <property type="entry name" value="OM_lipoprot_carrier_LolA-like"/>
</dbReference>
<dbReference type="InterPro" id="IPR018323">
    <property type="entry name" value="OM_lipoprot_carrier_LolA_Pbac"/>
</dbReference>
<dbReference type="NCBIfam" id="TIGR00547">
    <property type="entry name" value="lolA"/>
    <property type="match status" value="1"/>
</dbReference>
<dbReference type="PANTHER" id="PTHR35869">
    <property type="entry name" value="OUTER-MEMBRANE LIPOPROTEIN CARRIER PROTEIN"/>
    <property type="match status" value="1"/>
</dbReference>
<dbReference type="PANTHER" id="PTHR35869:SF1">
    <property type="entry name" value="OUTER-MEMBRANE LIPOPROTEIN CARRIER PROTEIN"/>
    <property type="match status" value="1"/>
</dbReference>
<dbReference type="Pfam" id="PF03548">
    <property type="entry name" value="LolA"/>
    <property type="match status" value="1"/>
</dbReference>
<dbReference type="SUPFAM" id="SSF89392">
    <property type="entry name" value="Prokaryotic lipoproteins and lipoprotein localization factors"/>
    <property type="match status" value="1"/>
</dbReference>
<accession>B4TRS3</accession>
<reference key="1">
    <citation type="journal article" date="2011" name="J. Bacteriol.">
        <title>Comparative genomics of 28 Salmonella enterica isolates: evidence for CRISPR-mediated adaptive sublineage evolution.</title>
        <authorList>
            <person name="Fricke W.F."/>
            <person name="Mammel M.K."/>
            <person name="McDermott P.F."/>
            <person name="Tartera C."/>
            <person name="White D.G."/>
            <person name="Leclerc J.E."/>
            <person name="Ravel J."/>
            <person name="Cebula T.A."/>
        </authorList>
    </citation>
    <scope>NUCLEOTIDE SEQUENCE [LARGE SCALE GENOMIC DNA]</scope>
    <source>
        <strain>CVM19633</strain>
    </source>
</reference>
<keyword id="KW-0143">Chaperone</keyword>
<keyword id="KW-0574">Periplasm</keyword>
<keyword id="KW-0653">Protein transport</keyword>
<keyword id="KW-0732">Signal</keyword>
<keyword id="KW-0813">Transport</keyword>
<sequence length="203" mass="22481">MKKMAIACALLSSVVASSVWADAASSLKSRLDKVSSFHATFTQKVTDGSGAAVQEGQGDLWVKRPNLFNWHMTQPDESILVSDGKTLWFYNPFVEQATATWLKDATGNTPFMLIARNQASDWQQYNIKQDGDNFVLTPKASNGNLKQFTINVGRDGTIHQFSAVEQDDQRSAYQLKSQQNGAVDPSKFTFTPPQGVTIDDQRK</sequence>
<organism>
    <name type="scientific">Salmonella schwarzengrund (strain CVM19633)</name>
    <dbReference type="NCBI Taxonomy" id="439843"/>
    <lineage>
        <taxon>Bacteria</taxon>
        <taxon>Pseudomonadati</taxon>
        <taxon>Pseudomonadota</taxon>
        <taxon>Gammaproteobacteria</taxon>
        <taxon>Enterobacterales</taxon>
        <taxon>Enterobacteriaceae</taxon>
        <taxon>Salmonella</taxon>
    </lineage>
</organism>
<gene>
    <name evidence="1" type="primary">lolA</name>
    <name type="ordered locus">SeSA_A1075</name>
</gene>
<name>LOLA_SALSV</name>
<proteinExistence type="inferred from homology"/>